<dbReference type="EMBL" id="AE005674">
    <property type="protein sequence ID" value="AAN44827.2"/>
    <property type="molecule type" value="Genomic_DNA"/>
</dbReference>
<dbReference type="EMBL" id="AE014073">
    <property type="protein sequence ID" value="AAP19350.1"/>
    <property type="molecule type" value="Genomic_DNA"/>
</dbReference>
<dbReference type="RefSeq" id="NP_709120.2">
    <property type="nucleotide sequence ID" value="NC_004337.2"/>
</dbReference>
<dbReference type="RefSeq" id="WP_000091466.1">
    <property type="nucleotide sequence ID" value="NZ_WPGW01000003.1"/>
</dbReference>
<dbReference type="STRING" id="198214.SF3364"/>
<dbReference type="PaxDb" id="198214-SF3364"/>
<dbReference type="GeneID" id="1026810"/>
<dbReference type="KEGG" id="sfl:SF3364"/>
<dbReference type="KEGG" id="sfx:S4398"/>
<dbReference type="PATRIC" id="fig|198214.7.peg.3974"/>
<dbReference type="HOGENOM" id="CLU_080179_3_0_6"/>
<dbReference type="Proteomes" id="UP000001006">
    <property type="component" value="Chromosome"/>
</dbReference>
<dbReference type="Proteomes" id="UP000002673">
    <property type="component" value="Chromosome"/>
</dbReference>
<dbReference type="InterPro" id="IPR039446">
    <property type="entry name" value="DauR-like"/>
</dbReference>
<dbReference type="InterPro" id="IPR039445">
    <property type="entry name" value="DauR-like_HTH"/>
</dbReference>
<dbReference type="InterPro" id="IPR013559">
    <property type="entry name" value="YheO"/>
</dbReference>
<dbReference type="PANTHER" id="PTHR35568">
    <property type="entry name" value="TRANSCRIPTIONAL REGULATOR DAUR"/>
    <property type="match status" value="1"/>
</dbReference>
<dbReference type="PANTHER" id="PTHR35568:SF1">
    <property type="entry name" value="TRANSCRIPTIONAL REGULATOR DAUR"/>
    <property type="match status" value="1"/>
</dbReference>
<dbReference type="Pfam" id="PF13309">
    <property type="entry name" value="HTH_22"/>
    <property type="match status" value="1"/>
</dbReference>
<dbReference type="Pfam" id="PF08348">
    <property type="entry name" value="PAS_6"/>
    <property type="match status" value="1"/>
</dbReference>
<name>YHEO_SHIFL</name>
<proteinExistence type="predicted"/>
<feature type="chain" id="PRO_0000169511" description="Uncharacterized protein YheO">
    <location>
        <begin position="1"/>
        <end position="240"/>
    </location>
</feature>
<reference key="1">
    <citation type="journal article" date="2002" name="Nucleic Acids Res.">
        <title>Genome sequence of Shigella flexneri 2a: insights into pathogenicity through comparison with genomes of Escherichia coli K12 and O157.</title>
        <authorList>
            <person name="Jin Q."/>
            <person name="Yuan Z."/>
            <person name="Xu J."/>
            <person name="Wang Y."/>
            <person name="Shen Y."/>
            <person name="Lu W."/>
            <person name="Wang J."/>
            <person name="Liu H."/>
            <person name="Yang J."/>
            <person name="Yang F."/>
            <person name="Zhang X."/>
            <person name="Zhang J."/>
            <person name="Yang G."/>
            <person name="Wu H."/>
            <person name="Qu D."/>
            <person name="Dong J."/>
            <person name="Sun L."/>
            <person name="Xue Y."/>
            <person name="Zhao A."/>
            <person name="Gao Y."/>
            <person name="Zhu J."/>
            <person name="Kan B."/>
            <person name="Ding K."/>
            <person name="Chen S."/>
            <person name="Cheng H."/>
            <person name="Yao Z."/>
            <person name="He B."/>
            <person name="Chen R."/>
            <person name="Ma D."/>
            <person name="Qiang B."/>
            <person name="Wen Y."/>
            <person name="Hou Y."/>
            <person name="Yu J."/>
        </authorList>
    </citation>
    <scope>NUCLEOTIDE SEQUENCE [LARGE SCALE GENOMIC DNA]</scope>
    <source>
        <strain>301 / Serotype 2a</strain>
    </source>
</reference>
<reference key="2">
    <citation type="journal article" date="2003" name="Infect. Immun.">
        <title>Complete genome sequence and comparative genomics of Shigella flexneri serotype 2a strain 2457T.</title>
        <authorList>
            <person name="Wei J."/>
            <person name="Goldberg M.B."/>
            <person name="Burland V."/>
            <person name="Venkatesan M.M."/>
            <person name="Deng W."/>
            <person name="Fournier G."/>
            <person name="Mayhew G.F."/>
            <person name="Plunkett G. III"/>
            <person name="Rose D.J."/>
            <person name="Darling A."/>
            <person name="Mau B."/>
            <person name="Perna N.T."/>
            <person name="Payne S.M."/>
            <person name="Runyen-Janecky L.J."/>
            <person name="Zhou S."/>
            <person name="Schwartz D.C."/>
            <person name="Blattner F.R."/>
        </authorList>
    </citation>
    <scope>NUCLEOTIDE SEQUENCE [LARGE SCALE GENOMIC DNA]</scope>
    <source>
        <strain>ATCC 700930 / 2457T / Serotype 2a</strain>
    </source>
</reference>
<gene>
    <name type="primary">yheO</name>
    <name type="ordered locus">SF3364</name>
    <name type="ordered locus">S4398</name>
</gene>
<keyword id="KW-1185">Reference proteome</keyword>
<sequence>MSRSLLTNETSELDLLDQRPFDQTDFDILKSYEAVVDGLAMLIGSHCEIVLHSLQDLKCSAIRIANGEHTGRKIGSPITDLALRMLHDMTGADSSVSKCYFTRAKSGVLMKSLTIAIRNREQRVIGLLCINMNLDVPFSQIMSTFVPPETPDVGSSVNFASSVEDLVTQTLEFTIEEVNADRNVSNNAKNRQIVLNLYEKGIFDIKDAINQVADRLNISKHTVYLYIRQFKSGDFQGQDK</sequence>
<evidence type="ECO:0000305" key="1"/>
<protein>
    <recommendedName>
        <fullName>Uncharacterized protein YheO</fullName>
    </recommendedName>
</protein>
<comment type="similarity">
    <text evidence="1">To H.influenzae HI_0575.</text>
</comment>
<accession>P64626</accession>
<accession>P45533</accession>
<organism>
    <name type="scientific">Shigella flexneri</name>
    <dbReference type="NCBI Taxonomy" id="623"/>
    <lineage>
        <taxon>Bacteria</taxon>
        <taxon>Pseudomonadati</taxon>
        <taxon>Pseudomonadota</taxon>
        <taxon>Gammaproteobacteria</taxon>
        <taxon>Enterobacterales</taxon>
        <taxon>Enterobacteriaceae</taxon>
        <taxon>Shigella</taxon>
    </lineage>
</organism>